<accession>Q1E7S5</accession>
<accession>J3KJB9</accession>
<name>MED7_COCIM</name>
<gene>
    <name type="primary">MED7</name>
    <name type="ORF">CIMG_01388</name>
</gene>
<keyword id="KW-0010">Activator</keyword>
<keyword id="KW-0539">Nucleus</keyword>
<keyword id="KW-1185">Reference proteome</keyword>
<keyword id="KW-0804">Transcription</keyword>
<keyword id="KW-0805">Transcription regulation</keyword>
<organism>
    <name type="scientific">Coccidioides immitis (strain RS)</name>
    <name type="common">Valley fever fungus</name>
    <dbReference type="NCBI Taxonomy" id="246410"/>
    <lineage>
        <taxon>Eukaryota</taxon>
        <taxon>Fungi</taxon>
        <taxon>Dikarya</taxon>
        <taxon>Ascomycota</taxon>
        <taxon>Pezizomycotina</taxon>
        <taxon>Eurotiomycetes</taxon>
        <taxon>Eurotiomycetidae</taxon>
        <taxon>Onygenales</taxon>
        <taxon>Onygenaceae</taxon>
        <taxon>Coccidioides</taxon>
    </lineage>
</organism>
<dbReference type="EMBL" id="GG704911">
    <property type="protein sequence ID" value="EAS36034.3"/>
    <property type="molecule type" value="Genomic_DNA"/>
</dbReference>
<dbReference type="RefSeq" id="XP_001247617.1">
    <property type="nucleotide sequence ID" value="XM_001247616.2"/>
</dbReference>
<dbReference type="SMR" id="Q1E7S5"/>
<dbReference type="FunCoup" id="Q1E7S5">
    <property type="interactions" value="705"/>
</dbReference>
<dbReference type="STRING" id="246410.Q1E7S5"/>
<dbReference type="GeneID" id="4565387"/>
<dbReference type="KEGG" id="cim:CIMG_01388"/>
<dbReference type="VEuPathDB" id="FungiDB:CIMG_01388"/>
<dbReference type="InParanoid" id="Q1E7S5"/>
<dbReference type="OMA" id="MMQDHLD"/>
<dbReference type="OrthoDB" id="10253553at2759"/>
<dbReference type="Proteomes" id="UP000001261">
    <property type="component" value="Unassembled WGS sequence"/>
</dbReference>
<dbReference type="GO" id="GO:0070847">
    <property type="term" value="C:core mediator complex"/>
    <property type="evidence" value="ECO:0007669"/>
    <property type="project" value="TreeGrafter"/>
</dbReference>
<dbReference type="GO" id="GO:0016592">
    <property type="term" value="C:mediator complex"/>
    <property type="evidence" value="ECO:0007669"/>
    <property type="project" value="InterPro"/>
</dbReference>
<dbReference type="GO" id="GO:0003712">
    <property type="term" value="F:transcription coregulator activity"/>
    <property type="evidence" value="ECO:0007669"/>
    <property type="project" value="InterPro"/>
</dbReference>
<dbReference type="GO" id="GO:0006357">
    <property type="term" value="P:regulation of transcription by RNA polymerase II"/>
    <property type="evidence" value="ECO:0007669"/>
    <property type="project" value="InterPro"/>
</dbReference>
<dbReference type="Gene3D" id="6.10.140.1520">
    <property type="match status" value="1"/>
</dbReference>
<dbReference type="Gene3D" id="6.10.140.200">
    <property type="match status" value="1"/>
</dbReference>
<dbReference type="InterPro" id="IPR037212">
    <property type="entry name" value="Med7/Med21-like"/>
</dbReference>
<dbReference type="InterPro" id="IPR009244">
    <property type="entry name" value="Mediatior_Med7"/>
</dbReference>
<dbReference type="InterPro" id="IPR044888">
    <property type="entry name" value="Mediatior_Med7_sf"/>
</dbReference>
<dbReference type="PANTHER" id="PTHR21428">
    <property type="entry name" value="MEDIATOR OF RNA POLYMERASE II TRANSCRIPTION SUBUNIT 7"/>
    <property type="match status" value="1"/>
</dbReference>
<dbReference type="PANTHER" id="PTHR21428:SF11">
    <property type="entry name" value="MEDIATOR OF RNA POLYMERASE II TRANSCRIPTION SUBUNIT 7"/>
    <property type="match status" value="1"/>
</dbReference>
<dbReference type="Pfam" id="PF05983">
    <property type="entry name" value="Med7"/>
    <property type="match status" value="1"/>
</dbReference>
<dbReference type="SUPFAM" id="SSF140718">
    <property type="entry name" value="Mediator hinge subcomplex-like"/>
    <property type="match status" value="1"/>
</dbReference>
<comment type="function">
    <text evidence="1">Component of the Mediator complex, a coactivator involved in the regulated transcription of nearly all RNA polymerase II-dependent genes. Mediator functions as a bridge to convey information from gene-specific regulatory proteins to the basal RNA polymerase II transcription machinery. Mediator is recruited to promoters by direct interactions with regulatory proteins and serves as a scaffold for the assembly of a functional preinitiation complex with RNA polymerase II and the general transcription factors (By similarity).</text>
</comment>
<comment type="subunit">
    <text evidence="1">Component of the Mediator complex.</text>
</comment>
<comment type="subcellular location">
    <subcellularLocation>
        <location evidence="1">Nucleus</location>
    </subcellularLocation>
</comment>
<comment type="similarity">
    <text evidence="3">Belongs to the Mediator complex subunit 7 family.</text>
</comment>
<sequence>MEEGGQQKGITAAFPPPPPFWKKFTPENLERLEKAKREAEPQALSRKWSPEALHALKLAPELRYLVPPELPKEGSYSLFGEAQSLSTQLPSLEEQGIEQLYPSSLTNETAGPSPDHAYYLLKISKSLLLNFLELVGILSINPEQYEPKIEDIRNLFINAHHLLNLYRPHQSRESLITMMEEQLEQAKEEIREMEQTKERVEIYLRELEAEGRNVSPNDEPVQTPESGPHNTKTQTSESQANGEQVLWKLLDKVEES</sequence>
<proteinExistence type="inferred from homology"/>
<protein>
    <recommendedName>
        <fullName>Mediator of RNA polymerase II transcription subunit 7</fullName>
    </recommendedName>
    <alternativeName>
        <fullName>Mediator complex subunit 7</fullName>
    </alternativeName>
</protein>
<feature type="chain" id="PRO_0000303199" description="Mediator of RNA polymerase II transcription subunit 7">
    <location>
        <begin position="1"/>
        <end position="256"/>
    </location>
</feature>
<feature type="region of interest" description="Disordered" evidence="2">
    <location>
        <begin position="1"/>
        <end position="20"/>
    </location>
</feature>
<feature type="region of interest" description="Disordered" evidence="2">
    <location>
        <begin position="208"/>
        <end position="244"/>
    </location>
</feature>
<feature type="compositionally biased region" description="Polar residues" evidence="2">
    <location>
        <begin position="223"/>
        <end position="242"/>
    </location>
</feature>
<evidence type="ECO:0000250" key="1"/>
<evidence type="ECO:0000256" key="2">
    <source>
        <dbReference type="SAM" id="MobiDB-lite"/>
    </source>
</evidence>
<evidence type="ECO:0000305" key="3"/>
<reference key="1">
    <citation type="journal article" date="2009" name="Genome Res.">
        <title>Comparative genomic analyses of the human fungal pathogens Coccidioides and their relatives.</title>
        <authorList>
            <person name="Sharpton T.J."/>
            <person name="Stajich J.E."/>
            <person name="Rounsley S.D."/>
            <person name="Gardner M.J."/>
            <person name="Wortman J.R."/>
            <person name="Jordar V.S."/>
            <person name="Maiti R."/>
            <person name="Kodira C.D."/>
            <person name="Neafsey D.E."/>
            <person name="Zeng Q."/>
            <person name="Hung C.-Y."/>
            <person name="McMahan C."/>
            <person name="Muszewska A."/>
            <person name="Grynberg M."/>
            <person name="Mandel M.A."/>
            <person name="Kellner E.M."/>
            <person name="Barker B.M."/>
            <person name="Galgiani J.N."/>
            <person name="Orbach M.J."/>
            <person name="Kirkland T.N."/>
            <person name="Cole G.T."/>
            <person name="Henn M.R."/>
            <person name="Birren B.W."/>
            <person name="Taylor J.W."/>
        </authorList>
    </citation>
    <scope>NUCLEOTIDE SEQUENCE [LARGE SCALE GENOMIC DNA]</scope>
    <source>
        <strain>RS</strain>
    </source>
</reference>
<reference key="2">
    <citation type="journal article" date="2010" name="Genome Res.">
        <title>Population genomic sequencing of Coccidioides fungi reveals recent hybridization and transposon control.</title>
        <authorList>
            <person name="Neafsey D.E."/>
            <person name="Barker B.M."/>
            <person name="Sharpton T.J."/>
            <person name="Stajich J.E."/>
            <person name="Park D.J."/>
            <person name="Whiston E."/>
            <person name="Hung C.-Y."/>
            <person name="McMahan C."/>
            <person name="White J."/>
            <person name="Sykes S."/>
            <person name="Heiman D."/>
            <person name="Young S."/>
            <person name="Zeng Q."/>
            <person name="Abouelleil A."/>
            <person name="Aftuck L."/>
            <person name="Bessette D."/>
            <person name="Brown A."/>
            <person name="FitzGerald M."/>
            <person name="Lui A."/>
            <person name="Macdonald J.P."/>
            <person name="Priest M."/>
            <person name="Orbach M.J."/>
            <person name="Galgiani J.N."/>
            <person name="Kirkland T.N."/>
            <person name="Cole G.T."/>
            <person name="Birren B.W."/>
            <person name="Henn M.R."/>
            <person name="Taylor J.W."/>
            <person name="Rounsley S.D."/>
        </authorList>
    </citation>
    <scope>GENOME REANNOTATION</scope>
    <source>
        <strain>RS</strain>
    </source>
</reference>